<protein>
    <recommendedName>
        <fullName>Glycine-rich RNA-binding protein GRP2A</fullName>
    </recommendedName>
</protein>
<name>GRP2_SINAL</name>
<comment type="function">
    <text>May play a general role in circadian phenomena associated with meristematic tissue.</text>
</comment>
<comment type="subcellular location">
    <subcellularLocation>
        <location>Nucleus</location>
    </subcellularLocation>
</comment>
<comment type="tissue specificity">
    <text>Predominantly expressed in meristematic and growing tissue.</text>
</comment>
<comment type="developmental stage">
    <text>Its levels oscillate in plants grown in light/dark cycles with maxima between Zeitgeber time zt8 and zt12 (8-12 hours after onset of illumination) and minima around zt20.</text>
</comment>
<organism>
    <name type="scientific">Sinapis alba</name>
    <name type="common">White mustard</name>
    <name type="synonym">Brassica hirta</name>
    <dbReference type="NCBI Taxonomy" id="3728"/>
    <lineage>
        <taxon>Eukaryota</taxon>
        <taxon>Viridiplantae</taxon>
        <taxon>Streptophyta</taxon>
        <taxon>Embryophyta</taxon>
        <taxon>Tracheophyta</taxon>
        <taxon>Spermatophyta</taxon>
        <taxon>Magnoliopsida</taxon>
        <taxon>eudicotyledons</taxon>
        <taxon>Gunneridae</taxon>
        <taxon>Pentapetalae</taxon>
        <taxon>rosids</taxon>
        <taxon>malvids</taxon>
        <taxon>Brassicales</taxon>
        <taxon>Brassicaceae</taxon>
        <taxon>Brassiceae</taxon>
        <taxon>Sinapis</taxon>
    </lineage>
</organism>
<keyword id="KW-0539">Nucleus</keyword>
<keyword id="KW-0694">RNA-binding</keyword>
<evidence type="ECO:0000255" key="1">
    <source>
        <dbReference type="PROSITE-ProRule" id="PRU00176"/>
    </source>
</evidence>
<evidence type="ECO:0000256" key="2">
    <source>
        <dbReference type="SAM" id="MobiDB-lite"/>
    </source>
</evidence>
<reference key="1">
    <citation type="journal article" date="1994" name="Plant J.">
        <title>A light- and temperature-entrained circadian clock controls expression of transcripts encoding nuclear proteins with homology to RNA-binding proteins in meristematic tissue.</title>
        <authorList>
            <person name="Heintzen C."/>
            <person name="Melzer S."/>
            <person name="Fischer R."/>
            <person name="Kappeler S."/>
            <person name="Apel K."/>
            <person name="Staiger D."/>
        </authorList>
    </citation>
    <scope>NUCLEOTIDE SEQUENCE [MRNA]</scope>
</reference>
<dbReference type="EMBL" id="L31377">
    <property type="protein sequence ID" value="AAA59213.1"/>
    <property type="molecule type" value="mRNA"/>
</dbReference>
<dbReference type="PIR" id="T10465">
    <property type="entry name" value="T10465"/>
</dbReference>
<dbReference type="SMR" id="P49311"/>
<dbReference type="OrthoDB" id="439808at2759"/>
<dbReference type="GO" id="GO:0005634">
    <property type="term" value="C:nucleus"/>
    <property type="evidence" value="ECO:0007669"/>
    <property type="project" value="UniProtKB-SubCell"/>
</dbReference>
<dbReference type="GO" id="GO:0003723">
    <property type="term" value="F:RNA binding"/>
    <property type="evidence" value="ECO:0007669"/>
    <property type="project" value="UniProtKB-KW"/>
</dbReference>
<dbReference type="GO" id="GO:0016070">
    <property type="term" value="P:RNA metabolic process"/>
    <property type="evidence" value="ECO:0007669"/>
    <property type="project" value="UniProtKB-ARBA"/>
</dbReference>
<dbReference type="CDD" id="cd21608">
    <property type="entry name" value="RRM2_NsCP33_like"/>
    <property type="match status" value="1"/>
</dbReference>
<dbReference type="Gene3D" id="3.30.70.330">
    <property type="match status" value="1"/>
</dbReference>
<dbReference type="InterPro" id="IPR012677">
    <property type="entry name" value="Nucleotide-bd_a/b_plait_sf"/>
</dbReference>
<dbReference type="InterPro" id="IPR035979">
    <property type="entry name" value="RBD_domain_sf"/>
</dbReference>
<dbReference type="InterPro" id="IPR048289">
    <property type="entry name" value="RRM2_NsCP33-like"/>
</dbReference>
<dbReference type="InterPro" id="IPR000504">
    <property type="entry name" value="RRM_dom"/>
</dbReference>
<dbReference type="InterPro" id="IPR052462">
    <property type="entry name" value="SLIRP/GR-RBP-like"/>
</dbReference>
<dbReference type="PANTHER" id="PTHR48027">
    <property type="entry name" value="HETEROGENEOUS NUCLEAR RIBONUCLEOPROTEIN 87F-RELATED"/>
    <property type="match status" value="1"/>
</dbReference>
<dbReference type="Pfam" id="PF00076">
    <property type="entry name" value="RRM_1"/>
    <property type="match status" value="1"/>
</dbReference>
<dbReference type="SMART" id="SM00360">
    <property type="entry name" value="RRM"/>
    <property type="match status" value="1"/>
</dbReference>
<dbReference type="SUPFAM" id="SSF54928">
    <property type="entry name" value="RNA-binding domain, RBD"/>
    <property type="match status" value="1"/>
</dbReference>
<dbReference type="PROSITE" id="PS50102">
    <property type="entry name" value="RRM"/>
    <property type="match status" value="1"/>
</dbReference>
<sequence>MASPDVEYRCFVGGLAWATDERSLETAFSQFGELVDSKIINDRETGRSRGFGFVTFKDEKSMKDAIEGMNGQDLDGRSITVNEAQSRGSGAGGGGRGGGGGYRGGGGYGGGGGGYGGGRREGGGYSGGGGGYSSRGGGGGGYGGGGRRDGGGYGGGEGGGYGGGGGGGW</sequence>
<accession>P49311</accession>
<proteinExistence type="evidence at transcript level"/>
<feature type="chain" id="PRO_0000081604" description="Glycine-rich RNA-binding protein GRP2A">
    <location>
        <begin position="1"/>
        <end position="169"/>
    </location>
</feature>
<feature type="domain" description="RRM" evidence="1">
    <location>
        <begin position="8"/>
        <end position="86"/>
    </location>
</feature>
<feature type="region of interest" description="Disordered" evidence="2">
    <location>
        <begin position="69"/>
        <end position="100"/>
    </location>
</feature>
<feature type="region of interest" description="Disordered" evidence="2">
    <location>
        <begin position="125"/>
        <end position="169"/>
    </location>
</feature>
<feature type="compositionally biased region" description="Gly residues" evidence="2">
    <location>
        <begin position="89"/>
        <end position="100"/>
    </location>
</feature>